<gene>
    <name type="ordered locus">A103R</name>
</gene>
<feature type="chain" id="PRO_0000210107" description="mRNA-capping enzyme">
    <location>
        <begin position="1"/>
        <end position="330"/>
    </location>
</feature>
<feature type="active site" description="N6-GMP-lysine intermediate">
    <location>
        <position position="82"/>
    </location>
</feature>
<feature type="strand" evidence="2">
    <location>
        <begin position="14"/>
        <end position="21"/>
    </location>
</feature>
<feature type="strand" evidence="2">
    <location>
        <begin position="24"/>
        <end position="31"/>
    </location>
</feature>
<feature type="helix" evidence="2">
    <location>
        <begin position="33"/>
        <end position="46"/>
    </location>
</feature>
<feature type="strand" evidence="2">
    <location>
        <begin position="57"/>
        <end position="63"/>
    </location>
</feature>
<feature type="helix" evidence="2">
    <location>
        <begin position="66"/>
        <end position="68"/>
    </location>
</feature>
<feature type="helix" evidence="2">
    <location>
        <begin position="69"/>
        <end position="74"/>
    </location>
</feature>
<feature type="strand" evidence="2">
    <location>
        <begin position="77"/>
        <end position="83"/>
    </location>
</feature>
<feature type="strand" evidence="2">
    <location>
        <begin position="85"/>
        <end position="95"/>
    </location>
</feature>
<feature type="strand" evidence="2">
    <location>
        <begin position="98"/>
        <end position="104"/>
    </location>
</feature>
<feature type="strand" evidence="2">
    <location>
        <begin position="110"/>
        <end position="112"/>
    </location>
</feature>
<feature type="helix" evidence="2">
    <location>
        <begin position="122"/>
        <end position="124"/>
    </location>
</feature>
<feature type="strand" evidence="2">
    <location>
        <begin position="126"/>
        <end position="135"/>
    </location>
</feature>
<feature type="turn" evidence="2">
    <location>
        <begin position="136"/>
        <end position="139"/>
    </location>
</feature>
<feature type="strand" evidence="2">
    <location>
        <begin position="140"/>
        <end position="151"/>
    </location>
</feature>
<feature type="helix" evidence="2">
    <location>
        <begin position="161"/>
        <end position="172"/>
    </location>
</feature>
<feature type="strand" evidence="2">
    <location>
        <begin position="181"/>
        <end position="187"/>
    </location>
</feature>
<feature type="helix" evidence="2">
    <location>
        <begin position="196"/>
        <end position="209"/>
    </location>
</feature>
<feature type="strand" evidence="2">
    <location>
        <begin position="212"/>
        <end position="222"/>
    </location>
</feature>
<feature type="strand" evidence="2">
    <location>
        <begin position="227"/>
        <end position="235"/>
    </location>
</feature>
<feature type="strand" evidence="2">
    <location>
        <begin position="243"/>
        <end position="247"/>
    </location>
</feature>
<feature type="turn" evidence="3">
    <location>
        <begin position="250"/>
        <end position="252"/>
    </location>
</feature>
<feature type="strand" evidence="2">
    <location>
        <begin position="254"/>
        <end position="257"/>
    </location>
</feature>
<feature type="turn" evidence="2">
    <location>
        <begin position="259"/>
        <end position="261"/>
    </location>
</feature>
<feature type="strand" evidence="2">
    <location>
        <begin position="264"/>
        <end position="266"/>
    </location>
</feature>
<feature type="strand" evidence="2">
    <location>
        <begin position="279"/>
        <end position="285"/>
    </location>
</feature>
<feature type="strand" evidence="2">
    <location>
        <begin position="288"/>
        <end position="294"/>
    </location>
</feature>
<feature type="helix" evidence="2">
    <location>
        <begin position="304"/>
        <end position="316"/>
    </location>
</feature>
<feature type="helix" evidence="2">
    <location>
        <begin position="320"/>
        <end position="323"/>
    </location>
</feature>
<accession>Q84424</accession>
<organismHost>
    <name type="scientific">Chlorella</name>
    <dbReference type="NCBI Taxonomy" id="3071"/>
</organismHost>
<evidence type="ECO:0000305" key="1"/>
<evidence type="ECO:0007829" key="2">
    <source>
        <dbReference type="PDB" id="1CKM"/>
    </source>
</evidence>
<evidence type="ECO:0007829" key="3">
    <source>
        <dbReference type="PDB" id="1CKN"/>
    </source>
</evidence>
<organism>
    <name type="scientific">Paramecium bursaria Chlorella virus 1</name>
    <name type="common">PBCV-1</name>
    <dbReference type="NCBI Taxonomy" id="10506"/>
    <lineage>
        <taxon>Viruses</taxon>
        <taxon>Varidnaviria</taxon>
        <taxon>Bamfordvirae</taxon>
        <taxon>Nucleocytoviricota</taxon>
        <taxon>Megaviricetes</taxon>
        <taxon>Algavirales</taxon>
        <taxon>Phycodnaviridae</taxon>
        <taxon>Chlorovirus</taxon>
    </lineage>
</organism>
<proteinExistence type="evidence at protein level"/>
<sequence length="330" mass="37832">MVPPTINTGKNITTERAVLTLNGLQIKLHKVVGESRDDIVAKMKDLAMDDHKFPRLPGPNPVSIERKDFEKLKQNKYVVSEKTDGIRFMMFFTRVFGFKVCTIIDRAMTVYLLPFKNIPRVLFQGSIFDGELCVDIVEKKFAFVLFDAVVVSGVTVSQMDLASRFFAMKRSLKEFKNVPEDPAILRYKEWIPLEHPTIIKDHLKKANAIYHTDGLIIMSVDEPVIYGRNFNLFKLKPGTHHTIDFIIMSEDGTIGIFDPNLRKNVPVGKLDGYYNKGSIVECGFADGTWKYIQGRSDKNQANDRLTYEKTLLNIEENITIDELLDLFKWE</sequence>
<name>MCE_PBCV1</name>
<protein>
    <recommendedName>
        <fullName>mRNA-capping enzyme</fullName>
    </recommendedName>
    <alternativeName>
        <fullName>GTP--RNA guanylyltransferase</fullName>
    </alternativeName>
    <alternativeName>
        <fullName>mRNA guanylyltransferase</fullName>
        <ecNumber>2.7.7.50</ecNumber>
    </alternativeName>
</protein>
<comment type="function">
    <text>mRNA capping. Transfers a GMP cap onto the end of mRNA that terminates with a 5'-diphosphate tail.</text>
</comment>
<comment type="catalytic activity">
    <reaction>
        <text>a 5'-end diphospho-ribonucleoside in mRNA + GTP + H(+) = a 5'-end (5'-triphosphoguanosine)-ribonucleoside in mRNA + diphosphate</text>
        <dbReference type="Rhea" id="RHEA:67012"/>
        <dbReference type="Rhea" id="RHEA-COMP:17165"/>
        <dbReference type="Rhea" id="RHEA-COMP:17166"/>
        <dbReference type="ChEBI" id="CHEBI:15378"/>
        <dbReference type="ChEBI" id="CHEBI:33019"/>
        <dbReference type="ChEBI" id="CHEBI:37565"/>
        <dbReference type="ChEBI" id="CHEBI:167616"/>
        <dbReference type="ChEBI" id="CHEBI:167617"/>
        <dbReference type="EC" id="2.7.7.50"/>
    </reaction>
</comment>
<comment type="cofactor">
    <cofactor>
        <name>Mg(2+)</name>
        <dbReference type="ChEBI" id="CHEBI:18420"/>
    </cofactor>
    <cofactor>
        <name>Mn(2+)</name>
        <dbReference type="ChEBI" id="CHEBI:29035"/>
    </cofactor>
</comment>
<comment type="subunit">
    <text>Monomer.</text>
</comment>
<comment type="similarity">
    <text evidence="1">Belongs to the eukaryotic GTase family.</text>
</comment>
<reference key="1">
    <citation type="journal article" date="1995" name="Virology">
        <title>Analysis of 43 kb of the Chlorella virus PBCV-1 330-kb genome: map positions 45 to 88.</title>
        <authorList>
            <person name="Li Y."/>
            <person name="Lu Z."/>
            <person name="Burbank D.E."/>
            <person name="Kutish G.F."/>
            <person name="Rock D.L."/>
            <person name="Etten J.L."/>
        </authorList>
    </citation>
    <scope>NUCLEOTIDE SEQUENCE [LARGE SCALE GENOMIC DNA]</scope>
</reference>
<reference key="2">
    <citation type="journal article" date="1997" name="Cell">
        <title>X-ray crystallography reveals a large conformational change during guanyl transfer by mRNA capping enzymes.</title>
        <authorList>
            <person name="Haakansson K."/>
            <person name="Doherty A.J."/>
            <person name="Shuman S."/>
            <person name="Wigley D.B."/>
        </authorList>
    </citation>
    <scope>X-RAY CRYSTALLOGRAPHY (2.5 ANGSTROMS)</scope>
</reference>
<reference key="3">
    <citation type="journal article" date="1998" name="Proc. Natl. Acad. Sci. U.S.A.">
        <title>Structure of a complex between a cap analogue and mRNA guanylyl transferase demonstrates the structural chemistry of RNA capping.</title>
        <authorList>
            <person name="Haakansson K."/>
            <person name="Wigley D.B."/>
        </authorList>
    </citation>
    <scope>X-RAY CRYSTALLOGRAPHY (3.1 ANGSTROMS) OF 11-327</scope>
</reference>
<keyword id="KW-0002">3D-structure</keyword>
<keyword id="KW-0342">GTP-binding</keyword>
<keyword id="KW-0506">mRNA capping</keyword>
<keyword id="KW-0507">mRNA processing</keyword>
<keyword id="KW-0547">Nucleotide-binding</keyword>
<keyword id="KW-0548">Nucleotidyltransferase</keyword>
<keyword id="KW-1185">Reference proteome</keyword>
<keyword id="KW-0808">Transferase</keyword>
<dbReference type="EC" id="2.7.7.50"/>
<dbReference type="EMBL" id="JF411744">
    <property type="protein sequence ID" value="AAC96471.1"/>
    <property type="molecule type" value="Genomic_DNA"/>
</dbReference>
<dbReference type="PIR" id="T17593">
    <property type="entry name" value="T17593"/>
</dbReference>
<dbReference type="RefSeq" id="NP_048451.1">
    <property type="nucleotide sequence ID" value="NC_000852.5"/>
</dbReference>
<dbReference type="PDB" id="1CKM">
    <property type="method" value="X-ray"/>
    <property type="resolution" value="2.50 A"/>
    <property type="chains" value="A/B=1-330"/>
</dbReference>
<dbReference type="PDB" id="1CKN">
    <property type="method" value="X-ray"/>
    <property type="resolution" value="2.50 A"/>
    <property type="chains" value="A/B=1-330"/>
</dbReference>
<dbReference type="PDB" id="1CKO">
    <property type="method" value="X-ray"/>
    <property type="resolution" value="3.10 A"/>
    <property type="chains" value="A=1-330"/>
</dbReference>
<dbReference type="PDBsum" id="1CKM"/>
<dbReference type="PDBsum" id="1CKN"/>
<dbReference type="PDBsum" id="1CKO"/>
<dbReference type="SMR" id="Q84424"/>
<dbReference type="DrugBank" id="DB03931">
    <property type="generic name" value="Diguanosine-5'-Triphosphate"/>
</dbReference>
<dbReference type="DrugBank" id="DB04137">
    <property type="generic name" value="Guanosine-5'-Triphosphate"/>
</dbReference>
<dbReference type="GeneID" id="918242"/>
<dbReference type="KEGG" id="vg:918242"/>
<dbReference type="OrthoDB" id="6160at10239"/>
<dbReference type="BRENDA" id="2.7.7.50">
    <property type="organism ID" value="4540"/>
</dbReference>
<dbReference type="EvolutionaryTrace" id="Q84424"/>
<dbReference type="Proteomes" id="UP000000862">
    <property type="component" value="Genome"/>
</dbReference>
<dbReference type="GO" id="GO:0005524">
    <property type="term" value="F:ATP binding"/>
    <property type="evidence" value="ECO:0007669"/>
    <property type="project" value="InterPro"/>
</dbReference>
<dbReference type="GO" id="GO:0005525">
    <property type="term" value="F:GTP binding"/>
    <property type="evidence" value="ECO:0007669"/>
    <property type="project" value="UniProtKB-KW"/>
</dbReference>
<dbReference type="GO" id="GO:0004484">
    <property type="term" value="F:mRNA guanylyltransferase activity"/>
    <property type="evidence" value="ECO:0007669"/>
    <property type="project" value="UniProtKB-EC"/>
</dbReference>
<dbReference type="GO" id="GO:0006370">
    <property type="term" value="P:7-methylguanosine mRNA capping"/>
    <property type="evidence" value="ECO:0007669"/>
    <property type="project" value="UniProtKB-KW"/>
</dbReference>
<dbReference type="CDD" id="cd07895">
    <property type="entry name" value="Adenylation_mRNA_capping"/>
    <property type="match status" value="1"/>
</dbReference>
<dbReference type="Gene3D" id="3.30.470.30">
    <property type="entry name" value="DNA ligase/mRNA capping enzyme"/>
    <property type="match status" value="2"/>
</dbReference>
<dbReference type="Gene3D" id="4.10.87.10">
    <property type="entry name" value="mRNA Capping Enzyme, domain 3"/>
    <property type="match status" value="1"/>
</dbReference>
<dbReference type="Gene3D" id="2.40.50.140">
    <property type="entry name" value="Nucleic acid-binding proteins"/>
    <property type="match status" value="1"/>
</dbReference>
<dbReference type="InterPro" id="IPR001339">
    <property type="entry name" value="mRNA_cap_enzyme_adenylation"/>
</dbReference>
<dbReference type="InterPro" id="IPR013846">
    <property type="entry name" value="mRNA_cap_enzyme_C"/>
</dbReference>
<dbReference type="InterPro" id="IPR051029">
    <property type="entry name" value="mRNA_Capping_Enz/RNA_Phosphat"/>
</dbReference>
<dbReference type="InterPro" id="IPR012340">
    <property type="entry name" value="NA-bd_OB-fold"/>
</dbReference>
<dbReference type="PANTHER" id="PTHR10367:SF25">
    <property type="entry name" value="DUAL SPECIFICITY PHOSPHATASE CATALYTIC DOMAIN PROTEIN (AFU_ORTHOLOGUE AFUA_1G03540)"/>
    <property type="match status" value="1"/>
</dbReference>
<dbReference type="PANTHER" id="PTHR10367">
    <property type="entry name" value="MRNA-CAPPING ENZYME"/>
    <property type="match status" value="1"/>
</dbReference>
<dbReference type="Pfam" id="PF03919">
    <property type="entry name" value="mRNA_cap_C"/>
    <property type="match status" value="1"/>
</dbReference>
<dbReference type="Pfam" id="PF01331">
    <property type="entry name" value="mRNA_cap_enzyme"/>
    <property type="match status" value="1"/>
</dbReference>
<dbReference type="SUPFAM" id="SSF56091">
    <property type="entry name" value="DNA ligase/mRNA capping enzyme, catalytic domain"/>
    <property type="match status" value="1"/>
</dbReference>
<dbReference type="SUPFAM" id="SSF50249">
    <property type="entry name" value="Nucleic acid-binding proteins"/>
    <property type="match status" value="1"/>
</dbReference>